<proteinExistence type="inferred from homology"/>
<feature type="chain" id="PRO_1000069828" description="4-hydroxybenzoate octaprenyltransferase">
    <location>
        <begin position="1"/>
        <end position="296"/>
    </location>
</feature>
<feature type="transmembrane region" description="Helical" evidence="1">
    <location>
        <begin position="29"/>
        <end position="49"/>
    </location>
</feature>
<feature type="transmembrane region" description="Helical" evidence="1">
    <location>
        <begin position="55"/>
        <end position="75"/>
    </location>
</feature>
<feature type="transmembrane region" description="Helical" evidence="1">
    <location>
        <begin position="102"/>
        <end position="122"/>
    </location>
</feature>
<feature type="transmembrane region" description="Helical" evidence="1">
    <location>
        <begin position="146"/>
        <end position="166"/>
    </location>
</feature>
<feature type="transmembrane region" description="Helical" evidence="1">
    <location>
        <begin position="169"/>
        <end position="189"/>
    </location>
</feature>
<feature type="transmembrane region" description="Helical" evidence="1">
    <location>
        <begin position="219"/>
        <end position="239"/>
    </location>
</feature>
<feature type="transmembrane region" description="Helical" evidence="1">
    <location>
        <begin position="241"/>
        <end position="261"/>
    </location>
</feature>
<feature type="transmembrane region" description="Helical" evidence="1">
    <location>
        <begin position="275"/>
        <end position="295"/>
    </location>
</feature>
<reference key="1">
    <citation type="journal article" date="2006" name="Genome Biol.">
        <title>Genomic analysis reveals that Pseudomonas aeruginosa virulence is combinatorial.</title>
        <authorList>
            <person name="Lee D.G."/>
            <person name="Urbach J.M."/>
            <person name="Wu G."/>
            <person name="Liberati N.T."/>
            <person name="Feinbaum R.L."/>
            <person name="Miyata S."/>
            <person name="Diggins L.T."/>
            <person name="He J."/>
            <person name="Saucier M."/>
            <person name="Deziel E."/>
            <person name="Friedman L."/>
            <person name="Li L."/>
            <person name="Grills G."/>
            <person name="Montgomery K."/>
            <person name="Kucherlapati R."/>
            <person name="Rahme L.G."/>
            <person name="Ausubel F.M."/>
        </authorList>
    </citation>
    <scope>NUCLEOTIDE SEQUENCE [LARGE SCALE GENOMIC DNA]</scope>
    <source>
        <strain>UCBPP-PA14</strain>
    </source>
</reference>
<comment type="function">
    <text evidence="1">Catalyzes the prenylation of para-hydroxybenzoate (PHB) with an all-trans polyprenyl group. Mediates the second step in the final reaction sequence of ubiquinone-8 (UQ-8) biosynthesis, which is the condensation of the polyisoprenoid side chain with PHB, generating the first membrane-bound Q intermediate 3-octaprenyl-4-hydroxybenzoate.</text>
</comment>
<comment type="catalytic activity">
    <reaction evidence="1">
        <text>all-trans-octaprenyl diphosphate + 4-hydroxybenzoate = 4-hydroxy-3-(all-trans-octaprenyl)benzoate + diphosphate</text>
        <dbReference type="Rhea" id="RHEA:27782"/>
        <dbReference type="ChEBI" id="CHEBI:1617"/>
        <dbReference type="ChEBI" id="CHEBI:17879"/>
        <dbReference type="ChEBI" id="CHEBI:33019"/>
        <dbReference type="ChEBI" id="CHEBI:57711"/>
        <dbReference type="EC" id="2.5.1.39"/>
    </reaction>
</comment>
<comment type="cofactor">
    <cofactor evidence="1">
        <name>Mg(2+)</name>
        <dbReference type="ChEBI" id="CHEBI:18420"/>
    </cofactor>
</comment>
<comment type="pathway">
    <text evidence="1">Cofactor biosynthesis; ubiquinone biosynthesis.</text>
</comment>
<comment type="subcellular location">
    <subcellularLocation>
        <location evidence="1">Cell inner membrane</location>
        <topology evidence="1">Multi-pass membrane protein</topology>
    </subcellularLocation>
</comment>
<comment type="similarity">
    <text evidence="1">Belongs to the UbiA prenyltransferase family.</text>
</comment>
<name>UBIA_PSEAB</name>
<sequence length="296" mass="33022">MFVTLIKPLARLHPRAWDFVQLVRLDRPIGIYLLLWPTLWSLWIAADGVPELKNLLIFVLGVILMRAAGCVINDFADRNFDGHVARTKARPLATGKISVREAWITFAVLVALSFGLVLLTNATTVWLSFGAVAVASLYPFMKRYTYYPQVVLGAAYSWGILMAFTAERGELPASAWLLFLANVLWTVAYDSYYAMTDREDDLKIGIKSTAILFGDADRLIIGSLQGLTLLLLALAGSRFELGLYFYLGLAVAAACFVWEAWSTRDRDPQACFRAFLHNHWAGLAIFLGTVADYALR</sequence>
<gene>
    <name evidence="1" type="primary">ubiA</name>
    <name type="ordered locus">PA14_70730</name>
</gene>
<keyword id="KW-0997">Cell inner membrane</keyword>
<keyword id="KW-1003">Cell membrane</keyword>
<keyword id="KW-0460">Magnesium</keyword>
<keyword id="KW-0472">Membrane</keyword>
<keyword id="KW-0808">Transferase</keyword>
<keyword id="KW-0812">Transmembrane</keyword>
<keyword id="KW-1133">Transmembrane helix</keyword>
<keyword id="KW-0831">Ubiquinone biosynthesis</keyword>
<evidence type="ECO:0000255" key="1">
    <source>
        <dbReference type="HAMAP-Rule" id="MF_01635"/>
    </source>
</evidence>
<dbReference type="EC" id="2.5.1.39" evidence="1"/>
<dbReference type="EMBL" id="CP000438">
    <property type="protein sequence ID" value="ABJ14741.1"/>
    <property type="molecule type" value="Genomic_DNA"/>
</dbReference>
<dbReference type="RefSeq" id="WP_003142027.1">
    <property type="nucleotide sequence ID" value="NZ_CP034244.1"/>
</dbReference>
<dbReference type="SMR" id="Q02E04"/>
<dbReference type="KEGG" id="pau:PA14_70730"/>
<dbReference type="PseudoCAP" id="PA14_70730"/>
<dbReference type="HOGENOM" id="CLU_034879_1_0_6"/>
<dbReference type="BioCyc" id="PAER208963:G1G74-5952-MONOMER"/>
<dbReference type="UniPathway" id="UPA00232"/>
<dbReference type="Proteomes" id="UP000000653">
    <property type="component" value="Chromosome"/>
</dbReference>
<dbReference type="GO" id="GO:0005886">
    <property type="term" value="C:plasma membrane"/>
    <property type="evidence" value="ECO:0007669"/>
    <property type="project" value="UniProtKB-SubCell"/>
</dbReference>
<dbReference type="GO" id="GO:0008412">
    <property type="term" value="F:4-hydroxybenzoate polyprenyltransferase activity"/>
    <property type="evidence" value="ECO:0007669"/>
    <property type="project" value="UniProtKB-UniRule"/>
</dbReference>
<dbReference type="GO" id="GO:0006744">
    <property type="term" value="P:ubiquinone biosynthetic process"/>
    <property type="evidence" value="ECO:0007669"/>
    <property type="project" value="UniProtKB-UniRule"/>
</dbReference>
<dbReference type="CDD" id="cd13959">
    <property type="entry name" value="PT_UbiA_COQ2"/>
    <property type="match status" value="1"/>
</dbReference>
<dbReference type="FunFam" id="1.10.357.140:FF:000002">
    <property type="entry name" value="4-hydroxybenzoate octaprenyltransferase"/>
    <property type="match status" value="1"/>
</dbReference>
<dbReference type="FunFam" id="1.20.120.1780:FF:000001">
    <property type="entry name" value="4-hydroxybenzoate octaprenyltransferase"/>
    <property type="match status" value="1"/>
</dbReference>
<dbReference type="Gene3D" id="1.10.357.140">
    <property type="entry name" value="UbiA prenyltransferase"/>
    <property type="match status" value="1"/>
</dbReference>
<dbReference type="Gene3D" id="1.20.120.1780">
    <property type="entry name" value="UbiA prenyltransferase"/>
    <property type="match status" value="1"/>
</dbReference>
<dbReference type="HAMAP" id="MF_01635">
    <property type="entry name" value="UbiA"/>
    <property type="match status" value="1"/>
</dbReference>
<dbReference type="InterPro" id="IPR006370">
    <property type="entry name" value="HB_polyprenyltransferase-like"/>
</dbReference>
<dbReference type="InterPro" id="IPR039653">
    <property type="entry name" value="Prenyltransferase"/>
</dbReference>
<dbReference type="InterPro" id="IPR000537">
    <property type="entry name" value="UbiA_prenyltransferase"/>
</dbReference>
<dbReference type="InterPro" id="IPR030470">
    <property type="entry name" value="UbiA_prenylTrfase_CS"/>
</dbReference>
<dbReference type="InterPro" id="IPR044878">
    <property type="entry name" value="UbiA_sf"/>
</dbReference>
<dbReference type="NCBIfam" id="TIGR01474">
    <property type="entry name" value="ubiA_proteo"/>
    <property type="match status" value="1"/>
</dbReference>
<dbReference type="PANTHER" id="PTHR11048:SF28">
    <property type="entry name" value="4-HYDROXYBENZOATE POLYPRENYLTRANSFERASE, MITOCHONDRIAL"/>
    <property type="match status" value="1"/>
</dbReference>
<dbReference type="PANTHER" id="PTHR11048">
    <property type="entry name" value="PRENYLTRANSFERASES"/>
    <property type="match status" value="1"/>
</dbReference>
<dbReference type="Pfam" id="PF01040">
    <property type="entry name" value="UbiA"/>
    <property type="match status" value="1"/>
</dbReference>
<dbReference type="PROSITE" id="PS00943">
    <property type="entry name" value="UBIA"/>
    <property type="match status" value="1"/>
</dbReference>
<accession>Q02E04</accession>
<organism>
    <name type="scientific">Pseudomonas aeruginosa (strain UCBPP-PA14)</name>
    <dbReference type="NCBI Taxonomy" id="208963"/>
    <lineage>
        <taxon>Bacteria</taxon>
        <taxon>Pseudomonadati</taxon>
        <taxon>Pseudomonadota</taxon>
        <taxon>Gammaproteobacteria</taxon>
        <taxon>Pseudomonadales</taxon>
        <taxon>Pseudomonadaceae</taxon>
        <taxon>Pseudomonas</taxon>
    </lineage>
</organism>
<protein>
    <recommendedName>
        <fullName evidence="1">4-hydroxybenzoate octaprenyltransferase</fullName>
        <ecNumber evidence="1">2.5.1.39</ecNumber>
    </recommendedName>
    <alternativeName>
        <fullName evidence="1">4-HB polyprenyltransferase</fullName>
    </alternativeName>
</protein>